<reference key="1">
    <citation type="submission" date="2004-12" db="EMBL/GenBank/DDBJ databases">
        <title>The genome sequence of Borrelia hermsii and Borrelia turicatae: comparative analysis of two agents of endemic N. America relapsing fever.</title>
        <authorList>
            <person name="Porcella S.F."/>
            <person name="Raffel S.J."/>
            <person name="Schrumpf M.E."/>
            <person name="Montgomery B."/>
            <person name="Smith T."/>
            <person name="Schwan T.G."/>
        </authorList>
    </citation>
    <scope>NUCLEOTIDE SEQUENCE [LARGE SCALE GENOMIC DNA]</scope>
    <source>
        <strain>HS1 / DAH</strain>
    </source>
</reference>
<accession>B2S125</accession>
<protein>
    <recommendedName>
        <fullName evidence="1">tRNA-specific 2-thiouridylase MnmA</fullName>
        <ecNumber evidence="1">2.8.1.13</ecNumber>
    </recommendedName>
</protein>
<comment type="function">
    <text evidence="1">Catalyzes the 2-thiolation of uridine at the wobble position (U34) of tRNA, leading to the formation of s(2)U34.</text>
</comment>
<comment type="catalytic activity">
    <reaction evidence="1">
        <text>S-sulfanyl-L-cysteinyl-[protein] + uridine(34) in tRNA + AH2 + ATP = 2-thiouridine(34) in tRNA + L-cysteinyl-[protein] + A + AMP + diphosphate + H(+)</text>
        <dbReference type="Rhea" id="RHEA:47032"/>
        <dbReference type="Rhea" id="RHEA-COMP:10131"/>
        <dbReference type="Rhea" id="RHEA-COMP:11726"/>
        <dbReference type="Rhea" id="RHEA-COMP:11727"/>
        <dbReference type="Rhea" id="RHEA-COMP:11728"/>
        <dbReference type="ChEBI" id="CHEBI:13193"/>
        <dbReference type="ChEBI" id="CHEBI:15378"/>
        <dbReference type="ChEBI" id="CHEBI:17499"/>
        <dbReference type="ChEBI" id="CHEBI:29950"/>
        <dbReference type="ChEBI" id="CHEBI:30616"/>
        <dbReference type="ChEBI" id="CHEBI:33019"/>
        <dbReference type="ChEBI" id="CHEBI:61963"/>
        <dbReference type="ChEBI" id="CHEBI:65315"/>
        <dbReference type="ChEBI" id="CHEBI:87170"/>
        <dbReference type="ChEBI" id="CHEBI:456215"/>
        <dbReference type="EC" id="2.8.1.13"/>
    </reaction>
</comment>
<comment type="subcellular location">
    <subcellularLocation>
        <location evidence="1">Cytoplasm</location>
    </subcellularLocation>
</comment>
<comment type="similarity">
    <text evidence="1">Belongs to the MnmA/TRMU family.</text>
</comment>
<comment type="sequence caution" evidence="2">
    <conflict type="erroneous initiation">
        <sequence resource="EMBL-CDS" id="AAX17181"/>
    </conflict>
</comment>
<dbReference type="EC" id="2.8.1.13" evidence="1"/>
<dbReference type="EMBL" id="CP000048">
    <property type="protein sequence ID" value="AAX17181.1"/>
    <property type="status" value="ALT_INIT"/>
    <property type="molecule type" value="Genomic_DNA"/>
</dbReference>
<dbReference type="RefSeq" id="WP_043924482.1">
    <property type="nucleotide sequence ID" value="NZ_CP073136.1"/>
</dbReference>
<dbReference type="SMR" id="B2S125"/>
<dbReference type="GeneID" id="71843506"/>
<dbReference type="KEGG" id="bhr:BH0682"/>
<dbReference type="HOGENOM" id="CLU_035188_1_2_12"/>
<dbReference type="Proteomes" id="UP000008834">
    <property type="component" value="Chromosome"/>
</dbReference>
<dbReference type="GO" id="GO:0005737">
    <property type="term" value="C:cytoplasm"/>
    <property type="evidence" value="ECO:0007669"/>
    <property type="project" value="UniProtKB-SubCell"/>
</dbReference>
<dbReference type="GO" id="GO:0005524">
    <property type="term" value="F:ATP binding"/>
    <property type="evidence" value="ECO:0007669"/>
    <property type="project" value="UniProtKB-KW"/>
</dbReference>
<dbReference type="GO" id="GO:0000049">
    <property type="term" value="F:tRNA binding"/>
    <property type="evidence" value="ECO:0007669"/>
    <property type="project" value="UniProtKB-KW"/>
</dbReference>
<dbReference type="GO" id="GO:0103016">
    <property type="term" value="F:tRNA-uridine 2-sulfurtransferase activity"/>
    <property type="evidence" value="ECO:0007669"/>
    <property type="project" value="UniProtKB-EC"/>
</dbReference>
<dbReference type="GO" id="GO:0006400">
    <property type="term" value="P:tRNA modification"/>
    <property type="evidence" value="ECO:0007669"/>
    <property type="project" value="UniProtKB-UniRule"/>
</dbReference>
<dbReference type="CDD" id="cd01998">
    <property type="entry name" value="MnmA_TRMU-like"/>
    <property type="match status" value="1"/>
</dbReference>
<dbReference type="FunFam" id="2.30.30.280:FF:000001">
    <property type="entry name" value="tRNA-specific 2-thiouridylase MnmA"/>
    <property type="match status" value="1"/>
</dbReference>
<dbReference type="Gene3D" id="2.30.30.280">
    <property type="entry name" value="Adenine nucleotide alpha hydrolases-like domains"/>
    <property type="match status" value="1"/>
</dbReference>
<dbReference type="Gene3D" id="3.40.50.620">
    <property type="entry name" value="HUPs"/>
    <property type="match status" value="1"/>
</dbReference>
<dbReference type="Gene3D" id="2.40.30.10">
    <property type="entry name" value="Translation factors"/>
    <property type="match status" value="1"/>
</dbReference>
<dbReference type="HAMAP" id="MF_00144">
    <property type="entry name" value="tRNA_thiouridyl_MnmA"/>
    <property type="match status" value="1"/>
</dbReference>
<dbReference type="InterPro" id="IPR004506">
    <property type="entry name" value="MnmA-like"/>
</dbReference>
<dbReference type="InterPro" id="IPR046885">
    <property type="entry name" value="MnmA-like_C"/>
</dbReference>
<dbReference type="InterPro" id="IPR046884">
    <property type="entry name" value="MnmA-like_central"/>
</dbReference>
<dbReference type="InterPro" id="IPR023382">
    <property type="entry name" value="MnmA-like_central_sf"/>
</dbReference>
<dbReference type="InterPro" id="IPR014729">
    <property type="entry name" value="Rossmann-like_a/b/a_fold"/>
</dbReference>
<dbReference type="InterPro" id="IPR051305">
    <property type="entry name" value="tRNA_2-thiouridylase_MnmA"/>
</dbReference>
<dbReference type="NCBIfam" id="NF001138">
    <property type="entry name" value="PRK00143.1"/>
    <property type="match status" value="1"/>
</dbReference>
<dbReference type="NCBIfam" id="TIGR00420">
    <property type="entry name" value="trmU"/>
    <property type="match status" value="1"/>
</dbReference>
<dbReference type="PANTHER" id="PTHR43052">
    <property type="match status" value="1"/>
</dbReference>
<dbReference type="PANTHER" id="PTHR43052:SF1">
    <property type="entry name" value="TRNA-5-TAURINOMETHYLURIDINE 2-SULFURTRANSFERASE"/>
    <property type="match status" value="1"/>
</dbReference>
<dbReference type="Pfam" id="PF03054">
    <property type="entry name" value="tRNA_Me_trans"/>
    <property type="match status" value="1"/>
</dbReference>
<dbReference type="Pfam" id="PF20258">
    <property type="entry name" value="tRNA_Me_trans_C"/>
    <property type="match status" value="1"/>
</dbReference>
<dbReference type="Pfam" id="PF20259">
    <property type="entry name" value="tRNA_Me_trans_M"/>
    <property type="match status" value="1"/>
</dbReference>
<dbReference type="SUPFAM" id="SSF52402">
    <property type="entry name" value="Adenine nucleotide alpha hydrolases-like"/>
    <property type="match status" value="1"/>
</dbReference>
<gene>
    <name evidence="1" type="primary">mnmA</name>
    <name type="ordered locus">BH0682</name>
</gene>
<organism>
    <name type="scientific">Borrelia hermsii (strain HS1 / DAH)</name>
    <dbReference type="NCBI Taxonomy" id="314723"/>
    <lineage>
        <taxon>Bacteria</taxon>
        <taxon>Pseudomonadati</taxon>
        <taxon>Spirochaetota</taxon>
        <taxon>Spirochaetia</taxon>
        <taxon>Spirochaetales</taxon>
        <taxon>Borreliaceae</taxon>
        <taxon>Borrelia</taxon>
    </lineage>
</organism>
<proteinExistence type="inferred from homology"/>
<evidence type="ECO:0000255" key="1">
    <source>
        <dbReference type="HAMAP-Rule" id="MF_00144"/>
    </source>
</evidence>
<evidence type="ECO:0000305" key="2"/>
<name>MNMA_BORHD</name>
<keyword id="KW-0067">ATP-binding</keyword>
<keyword id="KW-0963">Cytoplasm</keyword>
<keyword id="KW-1015">Disulfide bond</keyword>
<keyword id="KW-0547">Nucleotide-binding</keyword>
<keyword id="KW-0694">RNA-binding</keyword>
<keyword id="KW-0808">Transferase</keyword>
<keyword id="KW-0819">tRNA processing</keyword>
<keyword id="KW-0820">tRNA-binding</keyword>
<feature type="chain" id="PRO_0000349544" description="tRNA-specific 2-thiouridylase MnmA">
    <location>
        <begin position="1"/>
        <end position="354"/>
    </location>
</feature>
<feature type="region of interest" description="Interaction with tRNA" evidence="1">
    <location>
        <begin position="145"/>
        <end position="147"/>
    </location>
</feature>
<feature type="active site" description="Nucleophile" evidence="1">
    <location>
        <position position="100"/>
    </location>
</feature>
<feature type="active site" description="Cysteine persulfide intermediate" evidence="1">
    <location>
        <position position="195"/>
    </location>
</feature>
<feature type="binding site" evidence="1">
    <location>
        <begin position="6"/>
        <end position="13"/>
    </location>
    <ligand>
        <name>ATP</name>
        <dbReference type="ChEBI" id="CHEBI:30616"/>
    </ligand>
</feature>
<feature type="binding site" evidence="1">
    <location>
        <position position="33"/>
    </location>
    <ligand>
        <name>ATP</name>
        <dbReference type="ChEBI" id="CHEBI:30616"/>
    </ligand>
</feature>
<feature type="binding site" evidence="1">
    <location>
        <position position="123"/>
    </location>
    <ligand>
        <name>ATP</name>
        <dbReference type="ChEBI" id="CHEBI:30616"/>
    </ligand>
</feature>
<feature type="site" description="Interaction with tRNA" evidence="1">
    <location>
        <position position="124"/>
    </location>
</feature>
<feature type="site" description="Interaction with tRNA" evidence="1">
    <location>
        <position position="333"/>
    </location>
</feature>
<feature type="disulfide bond" description="Alternate" evidence="1">
    <location>
        <begin position="100"/>
        <end position="195"/>
    </location>
</feature>
<sequence length="354" mass="41152">MKIAVLLSGGVDSSVALYTMIQKGYKNIKCYYLKIWLEDELSYIGECPWEEDINYVEAVCTKFNVPYEIISLQDEYYKRVVTYAIEELKIGNTPSPDIFCNQRIKFGAFFDKINEHYDLIVTGHYAKIENKNNHYILKQAKDKIKDQSYFLSHLSREQISKLHFPLGDLLKTEIRQIAHKIDLPNKNRKDSQGICFLGKIKYDEFIKYHLGELKGNIIEQETGKILGTHNGYWFFTIGQRKGIKLSHGPWFVTEKDIQNNIIYISNSVNYLAQGKHQFLVHKTNWINKPVNNIDLSAKIRHGEKKIKCKIEMLKNDIIKVDLEEKDYGISPGQFCIFYQEDECLGGAQILQTLT</sequence>